<organism>
    <name type="scientific">Aliivibrio salmonicida (strain LFI1238)</name>
    <name type="common">Vibrio salmonicida (strain LFI1238)</name>
    <dbReference type="NCBI Taxonomy" id="316275"/>
    <lineage>
        <taxon>Bacteria</taxon>
        <taxon>Pseudomonadati</taxon>
        <taxon>Pseudomonadota</taxon>
        <taxon>Gammaproteobacteria</taxon>
        <taxon>Vibrionales</taxon>
        <taxon>Vibrionaceae</taxon>
        <taxon>Aliivibrio</taxon>
    </lineage>
</organism>
<name>MTLD_ALISL</name>
<proteinExistence type="inferred from homology"/>
<protein>
    <recommendedName>
        <fullName evidence="1">Mannitol-1-phosphate 5-dehydrogenase</fullName>
        <ecNumber evidence="1">1.1.1.17</ecNumber>
    </recommendedName>
</protein>
<gene>
    <name evidence="1" type="primary">mtlD</name>
    <name type="ordered locus">VSAL_I2814</name>
</gene>
<sequence>MKAVHFGAGNIGRGFIGKVLSDSNVAVTFADVDAPLVDQLCHDQSYKVKVVGSKCQIDTVTHVTAVNSTSDDVIERIVHTDLVTTAVGPNVLNIIAKTIAKGLTKRFEANNESPLNIIACENMVRGTTHLKNEVYSHLDDSFHARCDELVGFVDSAVDRIVPPSEAANDDLLEVTVESFSEWIVDEKQFKGGVPNIAGMEKTDNLMAFVERKLFTLNTGHCITAYLGALKGHETVRDAIQDPEIRTEVKAAMEESGEVLIRRYGFDKELHAAYIEKILGRFANPYLRDEIDRVARQPIRKLGENDRLIKPLLGTIEYGIENKTLLKGIAAAFKYVNDTDPQAVELQTHLQESGLKATLAHYTGLNENSSEAKKIEAIFTTLN</sequence>
<feature type="chain" id="PRO_1000099188" description="Mannitol-1-phosphate 5-dehydrogenase">
    <location>
        <begin position="1"/>
        <end position="382"/>
    </location>
</feature>
<feature type="binding site" evidence="1">
    <location>
        <begin position="3"/>
        <end position="14"/>
    </location>
    <ligand>
        <name>NAD(+)</name>
        <dbReference type="ChEBI" id="CHEBI:57540"/>
    </ligand>
</feature>
<reference key="1">
    <citation type="journal article" date="2008" name="BMC Genomics">
        <title>The genome sequence of the fish pathogen Aliivibrio salmonicida strain LFI1238 shows extensive evidence of gene decay.</title>
        <authorList>
            <person name="Hjerde E."/>
            <person name="Lorentzen M.S."/>
            <person name="Holden M.T."/>
            <person name="Seeger K."/>
            <person name="Paulsen S."/>
            <person name="Bason N."/>
            <person name="Churcher C."/>
            <person name="Harris D."/>
            <person name="Norbertczak H."/>
            <person name="Quail M.A."/>
            <person name="Sanders S."/>
            <person name="Thurston S."/>
            <person name="Parkhill J."/>
            <person name="Willassen N.P."/>
            <person name="Thomson N.R."/>
        </authorList>
    </citation>
    <scope>NUCLEOTIDE SEQUENCE [LARGE SCALE GENOMIC DNA]</scope>
    <source>
        <strain>LFI1238</strain>
    </source>
</reference>
<dbReference type="EC" id="1.1.1.17" evidence="1"/>
<dbReference type="EMBL" id="FM178379">
    <property type="protein sequence ID" value="CAQ80498.1"/>
    <property type="molecule type" value="Genomic_DNA"/>
</dbReference>
<dbReference type="RefSeq" id="WP_012551246.1">
    <property type="nucleotide sequence ID" value="NC_011312.1"/>
</dbReference>
<dbReference type="SMR" id="B6EN80"/>
<dbReference type="KEGG" id="vsa:VSAL_I2814"/>
<dbReference type="eggNOG" id="COG0246">
    <property type="taxonomic scope" value="Bacteria"/>
</dbReference>
<dbReference type="HOGENOM" id="CLU_036089_2_0_6"/>
<dbReference type="Proteomes" id="UP000001730">
    <property type="component" value="Chromosome 1"/>
</dbReference>
<dbReference type="GO" id="GO:0005829">
    <property type="term" value="C:cytosol"/>
    <property type="evidence" value="ECO:0007669"/>
    <property type="project" value="TreeGrafter"/>
</dbReference>
<dbReference type="GO" id="GO:0008926">
    <property type="term" value="F:mannitol-1-phosphate 5-dehydrogenase activity"/>
    <property type="evidence" value="ECO:0007669"/>
    <property type="project" value="UniProtKB-UniRule"/>
</dbReference>
<dbReference type="GO" id="GO:0019592">
    <property type="term" value="P:mannitol catabolic process"/>
    <property type="evidence" value="ECO:0007669"/>
    <property type="project" value="TreeGrafter"/>
</dbReference>
<dbReference type="FunFam" id="1.10.1040.10:FF:000009">
    <property type="entry name" value="Mannitol-1-phosphate 5-dehydrogenase"/>
    <property type="match status" value="1"/>
</dbReference>
<dbReference type="FunFam" id="3.40.50.720:FF:000075">
    <property type="entry name" value="Mannitol-1-phosphate 5-dehydrogenase"/>
    <property type="match status" value="1"/>
</dbReference>
<dbReference type="Gene3D" id="1.10.1040.10">
    <property type="entry name" value="N-(1-d-carboxylethyl)-l-norvaline Dehydrogenase, domain 2"/>
    <property type="match status" value="1"/>
</dbReference>
<dbReference type="Gene3D" id="3.40.50.720">
    <property type="entry name" value="NAD(P)-binding Rossmann-like Domain"/>
    <property type="match status" value="1"/>
</dbReference>
<dbReference type="HAMAP" id="MF_00196">
    <property type="entry name" value="Mannitol_dehydrog"/>
    <property type="match status" value="1"/>
</dbReference>
<dbReference type="InterPro" id="IPR008927">
    <property type="entry name" value="6-PGluconate_DH-like_C_sf"/>
</dbReference>
<dbReference type="InterPro" id="IPR013328">
    <property type="entry name" value="6PGD_dom2"/>
</dbReference>
<dbReference type="InterPro" id="IPR023028">
    <property type="entry name" value="Mannitol_1_phos_5_DH"/>
</dbReference>
<dbReference type="InterPro" id="IPR000669">
    <property type="entry name" value="Mannitol_DH"/>
</dbReference>
<dbReference type="InterPro" id="IPR013118">
    <property type="entry name" value="Mannitol_DH_C"/>
</dbReference>
<dbReference type="InterPro" id="IPR023027">
    <property type="entry name" value="Mannitol_DH_CS"/>
</dbReference>
<dbReference type="InterPro" id="IPR013131">
    <property type="entry name" value="Mannitol_DH_N"/>
</dbReference>
<dbReference type="InterPro" id="IPR036291">
    <property type="entry name" value="NAD(P)-bd_dom_sf"/>
</dbReference>
<dbReference type="NCBIfam" id="NF002646">
    <property type="entry name" value="PRK02318.1-2"/>
    <property type="match status" value="1"/>
</dbReference>
<dbReference type="NCBIfam" id="NF002647">
    <property type="entry name" value="PRK02318.1-3"/>
    <property type="match status" value="1"/>
</dbReference>
<dbReference type="NCBIfam" id="NF002650">
    <property type="entry name" value="PRK02318.2-2"/>
    <property type="match status" value="1"/>
</dbReference>
<dbReference type="NCBIfam" id="NF002652">
    <property type="entry name" value="PRK02318.2-5"/>
    <property type="match status" value="1"/>
</dbReference>
<dbReference type="PANTHER" id="PTHR30524:SF0">
    <property type="entry name" value="ALTRONATE OXIDOREDUCTASE-RELATED"/>
    <property type="match status" value="1"/>
</dbReference>
<dbReference type="PANTHER" id="PTHR30524">
    <property type="entry name" value="MANNITOL-1-PHOSPHATE 5-DEHYDROGENASE"/>
    <property type="match status" value="1"/>
</dbReference>
<dbReference type="Pfam" id="PF01232">
    <property type="entry name" value="Mannitol_dh"/>
    <property type="match status" value="1"/>
</dbReference>
<dbReference type="Pfam" id="PF08125">
    <property type="entry name" value="Mannitol_dh_C"/>
    <property type="match status" value="1"/>
</dbReference>
<dbReference type="PRINTS" id="PR00084">
    <property type="entry name" value="MTLDHDRGNASE"/>
</dbReference>
<dbReference type="SUPFAM" id="SSF48179">
    <property type="entry name" value="6-phosphogluconate dehydrogenase C-terminal domain-like"/>
    <property type="match status" value="1"/>
</dbReference>
<dbReference type="SUPFAM" id="SSF51735">
    <property type="entry name" value="NAD(P)-binding Rossmann-fold domains"/>
    <property type="match status" value="1"/>
</dbReference>
<dbReference type="PROSITE" id="PS00974">
    <property type="entry name" value="MANNITOL_DHGENASE"/>
    <property type="match status" value="1"/>
</dbReference>
<evidence type="ECO:0000255" key="1">
    <source>
        <dbReference type="HAMAP-Rule" id="MF_00196"/>
    </source>
</evidence>
<accession>B6EN80</accession>
<comment type="catalytic activity">
    <reaction evidence="1">
        <text>D-mannitol 1-phosphate + NAD(+) = beta-D-fructose 6-phosphate + NADH + H(+)</text>
        <dbReference type="Rhea" id="RHEA:19661"/>
        <dbReference type="ChEBI" id="CHEBI:15378"/>
        <dbReference type="ChEBI" id="CHEBI:57540"/>
        <dbReference type="ChEBI" id="CHEBI:57634"/>
        <dbReference type="ChEBI" id="CHEBI:57945"/>
        <dbReference type="ChEBI" id="CHEBI:61381"/>
        <dbReference type="EC" id="1.1.1.17"/>
    </reaction>
</comment>
<comment type="similarity">
    <text evidence="1">Belongs to the mannitol dehydrogenase family.</text>
</comment>
<keyword id="KW-0520">NAD</keyword>
<keyword id="KW-0560">Oxidoreductase</keyword>